<dbReference type="EMBL" id="CP000948">
    <property type="protein sequence ID" value="ACB02122.1"/>
    <property type="molecule type" value="Genomic_DNA"/>
</dbReference>
<dbReference type="RefSeq" id="WP_001288850.1">
    <property type="nucleotide sequence ID" value="NC_010473.1"/>
</dbReference>
<dbReference type="SMR" id="B1X8M6"/>
<dbReference type="GeneID" id="93776493"/>
<dbReference type="KEGG" id="ecd:ECDH10B_0992"/>
<dbReference type="HOGENOM" id="CLU_049853_0_0_6"/>
<dbReference type="GO" id="GO:0005737">
    <property type="term" value="C:cytoplasm"/>
    <property type="evidence" value="ECO:0007669"/>
    <property type="project" value="UniProtKB-UniRule"/>
</dbReference>
<dbReference type="GO" id="GO:0009295">
    <property type="term" value="C:nucleoid"/>
    <property type="evidence" value="ECO:0007669"/>
    <property type="project" value="UniProtKB-SubCell"/>
</dbReference>
<dbReference type="GO" id="GO:0005509">
    <property type="term" value="F:calcium ion binding"/>
    <property type="evidence" value="ECO:0007669"/>
    <property type="project" value="UniProtKB-UniRule"/>
</dbReference>
<dbReference type="GO" id="GO:0051301">
    <property type="term" value="P:cell division"/>
    <property type="evidence" value="ECO:0007669"/>
    <property type="project" value="UniProtKB-KW"/>
</dbReference>
<dbReference type="GO" id="GO:0030261">
    <property type="term" value="P:chromosome condensation"/>
    <property type="evidence" value="ECO:0007669"/>
    <property type="project" value="UniProtKB-KW"/>
</dbReference>
<dbReference type="GO" id="GO:0007059">
    <property type="term" value="P:chromosome segregation"/>
    <property type="evidence" value="ECO:0007669"/>
    <property type="project" value="UniProtKB-UniRule"/>
</dbReference>
<dbReference type="GO" id="GO:0006260">
    <property type="term" value="P:DNA replication"/>
    <property type="evidence" value="ECO:0007669"/>
    <property type="project" value="UniProtKB-UniRule"/>
</dbReference>
<dbReference type="CDD" id="cd16337">
    <property type="entry name" value="MukF_C"/>
    <property type="match status" value="1"/>
</dbReference>
<dbReference type="CDD" id="cd16335">
    <property type="entry name" value="MukF_N"/>
    <property type="match status" value="1"/>
</dbReference>
<dbReference type="Gene3D" id="1.20.58.590">
    <property type="entry name" value="Chromosome partition protein MukF, middle domain"/>
    <property type="match status" value="1"/>
</dbReference>
<dbReference type="Gene3D" id="1.10.225.40">
    <property type="entry name" value="MukF, C-terminal domain"/>
    <property type="match status" value="1"/>
</dbReference>
<dbReference type="Gene3D" id="1.10.10.10">
    <property type="entry name" value="Winged helix-like DNA-binding domain superfamily/Winged helix DNA-binding domain"/>
    <property type="match status" value="1"/>
</dbReference>
<dbReference type="HAMAP" id="MF_01803">
    <property type="entry name" value="MukF"/>
    <property type="match status" value="1"/>
</dbReference>
<dbReference type="InterPro" id="IPR005582">
    <property type="entry name" value="Chromosome_partition_MukF"/>
</dbReference>
<dbReference type="InterPro" id="IPR033441">
    <property type="entry name" value="MukF_C"/>
</dbReference>
<dbReference type="InterPro" id="IPR038198">
    <property type="entry name" value="MukF_C_sf"/>
</dbReference>
<dbReference type="InterPro" id="IPR033440">
    <property type="entry name" value="MukF_M"/>
</dbReference>
<dbReference type="InterPro" id="IPR036141">
    <property type="entry name" value="MukF_M_sp"/>
</dbReference>
<dbReference type="InterPro" id="IPR033439">
    <property type="entry name" value="MukF_WHTH"/>
</dbReference>
<dbReference type="InterPro" id="IPR036388">
    <property type="entry name" value="WH-like_DNA-bd_sf"/>
</dbReference>
<dbReference type="InterPro" id="IPR036390">
    <property type="entry name" value="WH_DNA-bd_sf"/>
</dbReference>
<dbReference type="NCBIfam" id="NF003615">
    <property type="entry name" value="PRK05260.1"/>
    <property type="match status" value="1"/>
</dbReference>
<dbReference type="Pfam" id="PF03882">
    <property type="entry name" value="KicB"/>
    <property type="match status" value="1"/>
</dbReference>
<dbReference type="Pfam" id="PF17193">
    <property type="entry name" value="MukF_C"/>
    <property type="match status" value="1"/>
</dbReference>
<dbReference type="Pfam" id="PF17192">
    <property type="entry name" value="MukF_M"/>
    <property type="match status" value="1"/>
</dbReference>
<dbReference type="PIRSF" id="PIRSF018282">
    <property type="entry name" value="MukF"/>
    <property type="match status" value="1"/>
</dbReference>
<dbReference type="SUPFAM" id="SSF140570">
    <property type="entry name" value="MukF C-terminal domain-like"/>
    <property type="match status" value="1"/>
</dbReference>
<dbReference type="SUPFAM" id="SSF46785">
    <property type="entry name" value="Winged helix' DNA-binding domain"/>
    <property type="match status" value="1"/>
</dbReference>
<feature type="chain" id="PRO_1000187505" description="Chromosome partition protein MukF">
    <location>
        <begin position="1"/>
        <end position="440"/>
    </location>
</feature>
<feature type="region of interest" description="Leucine-zipper">
    <location>
        <begin position="208"/>
        <end position="236"/>
    </location>
</feature>
<keyword id="KW-0106">Calcium</keyword>
<keyword id="KW-0131">Cell cycle</keyword>
<keyword id="KW-0132">Cell division</keyword>
<keyword id="KW-0159">Chromosome partition</keyword>
<keyword id="KW-0963">Cytoplasm</keyword>
<keyword id="KW-0226">DNA condensation</keyword>
<sequence>MSEFSQTVPELVAWARKNDFSISLPVDRLSFLLAVATLNGERLDGEMSEGELVDAFRHVSDAFEQTSETIGVRANNAINDMVRQRLLNRFTSEQAEGNAIYRLTPLGIGITDYYIRQREFSTLRLSMQLSIVAGELKRAADAAEEGGDEFHWHRNVYAPLKYSVAEIFDSIDLTQRLMDEQQQQVKDDIAQLLNKDWRAAISSCELLLSETSGTLRELQDTLEAAGDKLQANLLRIQDATMTHDDLHFVDRLVFDLQSKLDRIISWGQQSIDLWIGYDRHVHKFIRTAIDMDKNRVFAQRLRQSVQTYFDEPWALTYANADRLLDMRDEEMALRDEEVTGELPEDLEYEEFNEIREQLAAIIEEQLAVYKTRQVPLDLGLVVREYLSQYPRARHFDVARIVIDQAVRLGVAQADFTGLPAKWQPINDYGAKVQAHVIDKY</sequence>
<evidence type="ECO:0000255" key="1">
    <source>
        <dbReference type="HAMAP-Rule" id="MF_01803"/>
    </source>
</evidence>
<organism>
    <name type="scientific">Escherichia coli (strain K12 / DH10B)</name>
    <dbReference type="NCBI Taxonomy" id="316385"/>
    <lineage>
        <taxon>Bacteria</taxon>
        <taxon>Pseudomonadati</taxon>
        <taxon>Pseudomonadota</taxon>
        <taxon>Gammaproteobacteria</taxon>
        <taxon>Enterobacterales</taxon>
        <taxon>Enterobacteriaceae</taxon>
        <taxon>Escherichia</taxon>
    </lineage>
</organism>
<reference key="1">
    <citation type="journal article" date="2008" name="J. Bacteriol.">
        <title>The complete genome sequence of Escherichia coli DH10B: insights into the biology of a laboratory workhorse.</title>
        <authorList>
            <person name="Durfee T."/>
            <person name="Nelson R."/>
            <person name="Baldwin S."/>
            <person name="Plunkett G. III"/>
            <person name="Burland V."/>
            <person name="Mau B."/>
            <person name="Petrosino J.F."/>
            <person name="Qin X."/>
            <person name="Muzny D.M."/>
            <person name="Ayele M."/>
            <person name="Gibbs R.A."/>
            <person name="Csorgo B."/>
            <person name="Posfai G."/>
            <person name="Weinstock G.M."/>
            <person name="Blattner F.R."/>
        </authorList>
    </citation>
    <scope>NUCLEOTIDE SEQUENCE [LARGE SCALE GENOMIC DNA]</scope>
    <source>
        <strain>K12 / DH10B</strain>
    </source>
</reference>
<accession>B1X8M6</accession>
<gene>
    <name evidence="1" type="primary">mukF</name>
    <name type="ordered locus">ECDH10B_0992</name>
</gene>
<protein>
    <recommendedName>
        <fullName evidence="1">Chromosome partition protein MukF</fullName>
    </recommendedName>
</protein>
<name>MUKF_ECODH</name>
<comment type="function">
    <text evidence="1">Involved in chromosome condensation, segregation and cell cycle progression. May participate in facilitating chromosome segregation by condensation DNA from both sides of a centrally located replisome during cell division. Not required for mini-F plasmid partitioning. Probably acts via its interaction with MukB and MukE. Overexpression results in anucleate cells. It has a calcium binding activity.</text>
</comment>
<comment type="subunit">
    <text evidence="1">Interacts, and probably forms a ternary complex, with MukE and MukB via its C-terminal region. The complex formation is stimulated by calcium or magnesium. It is required for an interaction between MukE and MukB.</text>
</comment>
<comment type="subcellular location">
    <subcellularLocation>
        <location evidence="1">Cytoplasm</location>
        <location evidence="1">Nucleoid</location>
    </subcellularLocation>
    <text evidence="1">Restricted to the nucleoid region.</text>
</comment>
<comment type="similarity">
    <text evidence="1">Belongs to the MukF family.</text>
</comment>
<proteinExistence type="inferred from homology"/>